<feature type="chain" id="PRO_0000098729" description="Tryptophan synthase alpha chain">
    <location>
        <begin position="1"/>
        <end position="262"/>
    </location>
</feature>
<feature type="active site" description="Proton acceptor" evidence="1">
    <location>
        <position position="49"/>
    </location>
</feature>
<feature type="active site" description="Proton acceptor" evidence="1">
    <location>
        <position position="60"/>
    </location>
</feature>
<feature type="helix" evidence="2">
    <location>
        <begin position="3"/>
        <end position="14"/>
    </location>
</feature>
<feature type="strand" evidence="2">
    <location>
        <begin position="18"/>
        <end position="24"/>
    </location>
</feature>
<feature type="helix" evidence="2">
    <location>
        <begin position="30"/>
        <end position="42"/>
    </location>
</feature>
<feature type="strand" evidence="2">
    <location>
        <begin position="46"/>
        <end position="51"/>
    </location>
</feature>
<feature type="helix" evidence="2">
    <location>
        <begin position="62"/>
        <end position="73"/>
    </location>
</feature>
<feature type="helix" evidence="2">
    <location>
        <begin position="78"/>
        <end position="91"/>
    </location>
</feature>
<feature type="strand" evidence="2">
    <location>
        <begin position="97"/>
        <end position="100"/>
    </location>
</feature>
<feature type="helix" evidence="2">
    <location>
        <begin position="103"/>
        <end position="109"/>
    </location>
</feature>
<feature type="helix" evidence="2">
    <location>
        <begin position="111"/>
        <end position="120"/>
    </location>
</feature>
<feature type="strand" evidence="2">
    <location>
        <begin position="125"/>
        <end position="127"/>
    </location>
</feature>
<feature type="helix" evidence="2">
    <location>
        <begin position="133"/>
        <end position="145"/>
    </location>
</feature>
<feature type="helix" evidence="2">
    <location>
        <begin position="160"/>
        <end position="169"/>
    </location>
</feature>
<feature type="strand" evidence="2">
    <location>
        <begin position="174"/>
        <end position="179"/>
    </location>
</feature>
<feature type="helix" evidence="2">
    <location>
        <begin position="192"/>
        <end position="204"/>
    </location>
</feature>
<feature type="strand" evidence="2">
    <location>
        <begin position="209"/>
        <end position="214"/>
    </location>
</feature>
<feature type="helix" evidence="2">
    <location>
        <begin position="218"/>
        <end position="225"/>
    </location>
</feature>
<feature type="strand" evidence="2">
    <location>
        <begin position="228"/>
        <end position="233"/>
    </location>
</feature>
<feature type="helix" evidence="2">
    <location>
        <begin position="235"/>
        <end position="242"/>
    </location>
</feature>
<feature type="helix" evidence="2">
    <location>
        <begin position="246"/>
        <end position="258"/>
    </location>
</feature>
<gene>
    <name evidence="1" type="primary">trpA</name>
    <name type="ordered locus">aq_1548</name>
</gene>
<comment type="function">
    <text evidence="1">The alpha subunit is responsible for the aldol cleavage of indoleglycerol phosphate to indole and glyceraldehyde 3-phosphate.</text>
</comment>
<comment type="catalytic activity">
    <reaction evidence="1">
        <text>(1S,2R)-1-C-(indol-3-yl)glycerol 3-phosphate + L-serine = D-glyceraldehyde 3-phosphate + L-tryptophan + H2O</text>
        <dbReference type="Rhea" id="RHEA:10532"/>
        <dbReference type="ChEBI" id="CHEBI:15377"/>
        <dbReference type="ChEBI" id="CHEBI:33384"/>
        <dbReference type="ChEBI" id="CHEBI:57912"/>
        <dbReference type="ChEBI" id="CHEBI:58866"/>
        <dbReference type="ChEBI" id="CHEBI:59776"/>
        <dbReference type="EC" id="4.2.1.20"/>
    </reaction>
</comment>
<comment type="pathway">
    <text evidence="1">Amino-acid biosynthesis; L-tryptophan biosynthesis; L-tryptophan from chorismate: step 5/5.</text>
</comment>
<comment type="subunit">
    <text evidence="1">Tetramer of two alpha and two beta chains.</text>
</comment>
<comment type="similarity">
    <text evidence="1">Belongs to the TrpA family.</text>
</comment>
<proteinExistence type="evidence at protein level"/>
<sequence>MGRISDKFTELKEKREKALVSYLMVGYPDYETSLKAFKEVLKNGTDILEIGFPFSDPVADGPTIQVAHEVALKNGIRFEDVLELSETLRKEFPDIPFLLMTYYNPIFRIGLEKFCRLSREKGIDGFIVPDLPPEEAEELKAVMKKYVLSFVPLGAPTSTRKRIKLICEAADEMTYFVSVTGTTGAREKLPYERIKKKVEEYRELCDKPVVVGFGVSKKEHAREIGSFADGVVVGSALVKLAGQKKIEDLGNLVKELKEGLRE</sequence>
<evidence type="ECO:0000255" key="1">
    <source>
        <dbReference type="HAMAP-Rule" id="MF_00131"/>
    </source>
</evidence>
<evidence type="ECO:0007829" key="2">
    <source>
        <dbReference type="PDB" id="2EKC"/>
    </source>
</evidence>
<dbReference type="EC" id="4.2.1.20" evidence="1"/>
<dbReference type="EMBL" id="AE000657">
    <property type="protein sequence ID" value="AAC07458.1"/>
    <property type="molecule type" value="Genomic_DNA"/>
</dbReference>
<dbReference type="PIR" id="D70434">
    <property type="entry name" value="D70434"/>
</dbReference>
<dbReference type="RefSeq" id="NP_214067.1">
    <property type="nucleotide sequence ID" value="NC_000918.1"/>
</dbReference>
<dbReference type="RefSeq" id="WP_010881005.1">
    <property type="nucleotide sequence ID" value="NC_000918.1"/>
</dbReference>
<dbReference type="PDB" id="2EKC">
    <property type="method" value="X-ray"/>
    <property type="resolution" value="2.00 A"/>
    <property type="chains" value="A/B=1-262"/>
</dbReference>
<dbReference type="PDBsum" id="2EKC"/>
<dbReference type="SMR" id="O67502"/>
<dbReference type="FunCoup" id="O67502">
    <property type="interactions" value="465"/>
</dbReference>
<dbReference type="STRING" id="224324.aq_1548"/>
<dbReference type="EnsemblBacteria" id="AAC07458">
    <property type="protein sequence ID" value="AAC07458"/>
    <property type="gene ID" value="aq_1548"/>
</dbReference>
<dbReference type="KEGG" id="aae:aq_1548"/>
<dbReference type="PATRIC" id="fig|224324.8.peg.1201"/>
<dbReference type="eggNOG" id="COG0159">
    <property type="taxonomic scope" value="Bacteria"/>
</dbReference>
<dbReference type="HOGENOM" id="CLU_016734_0_0_0"/>
<dbReference type="InParanoid" id="O67502"/>
<dbReference type="OrthoDB" id="9804578at2"/>
<dbReference type="UniPathway" id="UPA00035">
    <property type="reaction ID" value="UER00044"/>
</dbReference>
<dbReference type="EvolutionaryTrace" id="O67502"/>
<dbReference type="Proteomes" id="UP000000798">
    <property type="component" value="Chromosome"/>
</dbReference>
<dbReference type="GO" id="GO:0005829">
    <property type="term" value="C:cytosol"/>
    <property type="evidence" value="ECO:0000318"/>
    <property type="project" value="GO_Central"/>
</dbReference>
<dbReference type="GO" id="GO:0004834">
    <property type="term" value="F:tryptophan synthase activity"/>
    <property type="evidence" value="ECO:0000318"/>
    <property type="project" value="GO_Central"/>
</dbReference>
<dbReference type="GO" id="GO:0000162">
    <property type="term" value="P:L-tryptophan biosynthetic process"/>
    <property type="evidence" value="ECO:0000318"/>
    <property type="project" value="GO_Central"/>
</dbReference>
<dbReference type="CDD" id="cd04724">
    <property type="entry name" value="Tryptophan_synthase_alpha"/>
    <property type="match status" value="1"/>
</dbReference>
<dbReference type="FunFam" id="3.20.20.70:FF:000037">
    <property type="entry name" value="Tryptophan synthase alpha chain"/>
    <property type="match status" value="1"/>
</dbReference>
<dbReference type="Gene3D" id="3.20.20.70">
    <property type="entry name" value="Aldolase class I"/>
    <property type="match status" value="1"/>
</dbReference>
<dbReference type="HAMAP" id="MF_00131">
    <property type="entry name" value="Trp_synth_alpha"/>
    <property type="match status" value="1"/>
</dbReference>
<dbReference type="InterPro" id="IPR013785">
    <property type="entry name" value="Aldolase_TIM"/>
</dbReference>
<dbReference type="InterPro" id="IPR011060">
    <property type="entry name" value="RibuloseP-bd_barrel"/>
</dbReference>
<dbReference type="InterPro" id="IPR018204">
    <property type="entry name" value="Trp_synthase_alpha_AS"/>
</dbReference>
<dbReference type="InterPro" id="IPR002028">
    <property type="entry name" value="Trp_synthase_suA"/>
</dbReference>
<dbReference type="NCBIfam" id="TIGR00262">
    <property type="entry name" value="trpA"/>
    <property type="match status" value="1"/>
</dbReference>
<dbReference type="PANTHER" id="PTHR43406:SF1">
    <property type="entry name" value="TRYPTOPHAN SYNTHASE ALPHA CHAIN, CHLOROPLASTIC"/>
    <property type="match status" value="1"/>
</dbReference>
<dbReference type="PANTHER" id="PTHR43406">
    <property type="entry name" value="TRYPTOPHAN SYNTHASE, ALPHA CHAIN"/>
    <property type="match status" value="1"/>
</dbReference>
<dbReference type="Pfam" id="PF00290">
    <property type="entry name" value="Trp_syntA"/>
    <property type="match status" value="1"/>
</dbReference>
<dbReference type="SUPFAM" id="SSF51366">
    <property type="entry name" value="Ribulose-phoshate binding barrel"/>
    <property type="match status" value="1"/>
</dbReference>
<dbReference type="PROSITE" id="PS00167">
    <property type="entry name" value="TRP_SYNTHASE_ALPHA"/>
    <property type="match status" value="1"/>
</dbReference>
<name>TRPA_AQUAE</name>
<keyword id="KW-0002">3D-structure</keyword>
<keyword id="KW-0028">Amino-acid biosynthesis</keyword>
<keyword id="KW-0057">Aromatic amino acid biosynthesis</keyword>
<keyword id="KW-0456">Lyase</keyword>
<keyword id="KW-1185">Reference proteome</keyword>
<keyword id="KW-0822">Tryptophan biosynthesis</keyword>
<protein>
    <recommendedName>
        <fullName evidence="1">Tryptophan synthase alpha chain</fullName>
        <ecNumber evidence="1">4.2.1.20</ecNumber>
    </recommendedName>
</protein>
<reference key="1">
    <citation type="journal article" date="1998" name="Nature">
        <title>The complete genome of the hyperthermophilic bacterium Aquifex aeolicus.</title>
        <authorList>
            <person name="Deckert G."/>
            <person name="Warren P.V."/>
            <person name="Gaasterland T."/>
            <person name="Young W.G."/>
            <person name="Lenox A.L."/>
            <person name="Graham D.E."/>
            <person name="Overbeek R."/>
            <person name="Snead M.A."/>
            <person name="Keller M."/>
            <person name="Aujay M."/>
            <person name="Huber R."/>
            <person name="Feldman R.A."/>
            <person name="Short J.M."/>
            <person name="Olsen G.J."/>
            <person name="Swanson R.V."/>
        </authorList>
    </citation>
    <scope>NUCLEOTIDE SEQUENCE [LARGE SCALE GENOMIC DNA]</scope>
    <source>
        <strain>VF5</strain>
    </source>
</reference>
<accession>O67502</accession>
<organism>
    <name type="scientific">Aquifex aeolicus (strain VF5)</name>
    <dbReference type="NCBI Taxonomy" id="224324"/>
    <lineage>
        <taxon>Bacteria</taxon>
        <taxon>Pseudomonadati</taxon>
        <taxon>Aquificota</taxon>
        <taxon>Aquificia</taxon>
        <taxon>Aquificales</taxon>
        <taxon>Aquificaceae</taxon>
        <taxon>Aquifex</taxon>
    </lineage>
</organism>